<evidence type="ECO:0000250" key="1"/>
<evidence type="ECO:0000255" key="2"/>
<evidence type="ECO:0000305" key="3"/>
<proteinExistence type="evidence at transcript level"/>
<feature type="signal peptide" evidence="2">
    <location>
        <begin position="1"/>
        <end position="20"/>
    </location>
</feature>
<feature type="propeptide" id="PRO_0000401563" evidence="1">
    <location>
        <begin position="21"/>
        <end position="41"/>
    </location>
</feature>
<feature type="chain" id="PRO_0000401564" description="U1-lycotoxin-Ls1s">
    <location>
        <begin position="42"/>
        <end position="107"/>
    </location>
</feature>
<feature type="disulfide bond" evidence="1">
    <location>
        <begin position="44"/>
        <end position="59"/>
    </location>
</feature>
<feature type="disulfide bond" evidence="1">
    <location>
        <begin position="51"/>
        <end position="68"/>
    </location>
</feature>
<feature type="disulfide bond" evidence="1">
    <location>
        <begin position="58"/>
        <end position="86"/>
    </location>
</feature>
<feature type="disulfide bond" evidence="1">
    <location>
        <begin position="70"/>
        <end position="84"/>
    </location>
</feature>
<accession>B6DCM3</accession>
<protein>
    <recommendedName>
        <fullName>U1-lycotoxin-Ls1s</fullName>
    </recommendedName>
    <alternativeName>
        <fullName>Toxin-like structure LSTX-A34</fullName>
    </alternativeName>
</protein>
<sequence length="107" mass="11912">MMKVLVVVALLVTLISYSSSEGIDDLEADELLSLMANEQTRKECIPKHHECTSNKHSCCRGNFFKYKCQCTTVVTQDGEQTERCFCGTPPHHKAAELVVGFGKKIFG</sequence>
<comment type="subcellular location">
    <subcellularLocation>
        <location evidence="1">Secreted</location>
    </subcellularLocation>
</comment>
<comment type="tissue specificity">
    <text>Expressed by the venom gland.</text>
</comment>
<comment type="domain">
    <text evidence="1">The presence of a 'disulfide through disulfide knot' structurally defines this protein as a knottin.</text>
</comment>
<comment type="similarity">
    <text evidence="3">Belongs to the neurotoxin 19 (CSTX) family. 04 (U1-Lctx) subfamily.</text>
</comment>
<organism>
    <name type="scientific">Lycosa singoriensis</name>
    <name type="common">Wolf spider</name>
    <name type="synonym">Aranea singoriensis</name>
    <dbReference type="NCBI Taxonomy" id="434756"/>
    <lineage>
        <taxon>Eukaryota</taxon>
        <taxon>Metazoa</taxon>
        <taxon>Ecdysozoa</taxon>
        <taxon>Arthropoda</taxon>
        <taxon>Chelicerata</taxon>
        <taxon>Arachnida</taxon>
        <taxon>Araneae</taxon>
        <taxon>Araneomorphae</taxon>
        <taxon>Entelegynae</taxon>
        <taxon>Lycosoidea</taxon>
        <taxon>Lycosidae</taxon>
        <taxon>Lycosa</taxon>
    </lineage>
</organism>
<dbReference type="EMBL" id="EU925957">
    <property type="protein sequence ID" value="ACI41289.1"/>
    <property type="molecule type" value="mRNA"/>
</dbReference>
<dbReference type="EMBL" id="FM863961">
    <property type="protein sequence ID" value="CAS03559.1"/>
    <property type="molecule type" value="mRNA"/>
</dbReference>
<dbReference type="SMR" id="B6DCM3"/>
<dbReference type="ArachnoServer" id="AS000906">
    <property type="toxin name" value="U1-lycotoxin-Ls1s"/>
</dbReference>
<dbReference type="GO" id="GO:0005576">
    <property type="term" value="C:extracellular region"/>
    <property type="evidence" value="ECO:0007669"/>
    <property type="project" value="UniProtKB-SubCell"/>
</dbReference>
<dbReference type="GO" id="GO:0090729">
    <property type="term" value="F:toxin activity"/>
    <property type="evidence" value="ECO:0007669"/>
    <property type="project" value="UniProtKB-KW"/>
</dbReference>
<dbReference type="InterPro" id="IPR019553">
    <property type="entry name" value="Spider_toxin_CSTX_knottin"/>
</dbReference>
<dbReference type="InterPro" id="IPR011142">
    <property type="entry name" value="Spider_toxin_CSTX_Knottin_CS"/>
</dbReference>
<dbReference type="Pfam" id="PF10530">
    <property type="entry name" value="Toxin_35"/>
    <property type="match status" value="1"/>
</dbReference>
<dbReference type="PROSITE" id="PS60029">
    <property type="entry name" value="SPIDER_CSTX"/>
    <property type="match status" value="1"/>
</dbReference>
<reference key="1">
    <citation type="journal article" date="2010" name="Zoology">
        <title>Transcriptome analysis of the venom glands of the Chinese wolf spider Lycosa singoriensis.</title>
        <authorList>
            <person name="Zhang Y."/>
            <person name="Chen J."/>
            <person name="Tang X."/>
            <person name="Wang F."/>
            <person name="Jiang L."/>
            <person name="Xiong X."/>
            <person name="Wang M."/>
            <person name="Rong M."/>
            <person name="Liu Z."/>
            <person name="Liang S."/>
        </authorList>
    </citation>
    <scope>NUCLEOTIDE SEQUENCE [LARGE SCALE MRNA]</scope>
    <source>
        <tissue>Venom gland</tissue>
    </source>
</reference>
<keyword id="KW-1015">Disulfide bond</keyword>
<keyword id="KW-0960">Knottin</keyword>
<keyword id="KW-0964">Secreted</keyword>
<keyword id="KW-0732">Signal</keyword>
<keyword id="KW-0800">Toxin</keyword>
<name>TX134_LYCSI</name>